<geneLocation type="chloroplast"/>
<dbReference type="EMBL" id="AB001684">
    <property type="protein sequence ID" value="BAA57949.1"/>
    <property type="molecule type" value="Genomic_DNA"/>
</dbReference>
<dbReference type="PIR" id="T07301">
    <property type="entry name" value="T07301"/>
</dbReference>
<dbReference type="RefSeq" id="NP_045873.1">
    <property type="nucleotide sequence ID" value="NC_001865.1"/>
</dbReference>
<dbReference type="SMR" id="P56350"/>
<dbReference type="GeneID" id="809208"/>
<dbReference type="GO" id="GO:0009507">
    <property type="term" value="C:chloroplast"/>
    <property type="evidence" value="ECO:0007669"/>
    <property type="project" value="UniProtKB-SubCell"/>
</dbReference>
<dbReference type="GO" id="GO:0051301">
    <property type="term" value="P:cell division"/>
    <property type="evidence" value="ECO:0007669"/>
    <property type="project" value="UniProtKB-KW"/>
</dbReference>
<protein>
    <recommendedName>
        <fullName>Putative cell division topological specificity factor</fullName>
    </recommendedName>
</protein>
<organism>
    <name type="scientific">Chlorella vulgaris</name>
    <name type="common">Green alga</name>
    <dbReference type="NCBI Taxonomy" id="3077"/>
    <lineage>
        <taxon>Eukaryota</taxon>
        <taxon>Viridiplantae</taxon>
        <taxon>Chlorophyta</taxon>
        <taxon>core chlorophytes</taxon>
        <taxon>Trebouxiophyceae</taxon>
        <taxon>Chlorellales</taxon>
        <taxon>Chlorellaceae</taxon>
        <taxon>Chlorella clade</taxon>
        <taxon>Chlorella</taxon>
    </lineage>
</organism>
<accession>P56350</accession>
<gene>
    <name type="primary">minE</name>
</gene>
<keyword id="KW-0131">Cell cycle</keyword>
<keyword id="KW-0132">Cell division</keyword>
<keyword id="KW-0150">Chloroplast</keyword>
<keyword id="KW-0934">Plastid</keyword>
<reference key="1">
    <citation type="journal article" date="1997" name="Proc. Natl. Acad. Sci. U.S.A.">
        <title>Complete nucleotide sequence of the chloroplast genome from the green alga Chlorella vulgaris: the existence of genes possibly involved in chloroplast division.</title>
        <authorList>
            <person name="Wakasugi T."/>
            <person name="Nagai T."/>
            <person name="Kapoor M."/>
            <person name="Sugita M."/>
            <person name="Ito M."/>
            <person name="Ito S."/>
            <person name="Tsudzuki J."/>
            <person name="Nakashima K."/>
            <person name="Tsudzuki T."/>
            <person name="Suzuki Y."/>
            <person name="Hamada A."/>
            <person name="Ohta T."/>
            <person name="Inamura A."/>
            <person name="Yoshinaga K."/>
            <person name="Sugiura M."/>
        </authorList>
    </citation>
    <scope>NUCLEOTIDE SEQUENCE [LARGE SCALE GENOMIC DNA]</scope>
    <source>
        <strain>IAM C-27 / Tamiya</strain>
    </source>
</reference>
<comment type="function">
    <text evidence="1">Prevents the cell division inhibition by proteins minC and minD at internal division sites while permitting inhibition at polar sites.</text>
</comment>
<comment type="subcellular location">
    <subcellularLocation>
        <location>Plastid</location>
        <location>Chloroplast</location>
    </subcellularLocation>
</comment>
<comment type="similarity">
    <text evidence="2">Belongs to the MinE family.</text>
</comment>
<evidence type="ECO:0000250" key="1"/>
<evidence type="ECO:0000305" key="2"/>
<sequence>MVELNFTQKQKQFLKDRKSLKSLVNQHLASDLGETSLSQYLDEFQILYNRFFCFYFFSYGENVFCSEEIFSSQLKNGFFPTKTKDEILSSPALNVIFSEKDFLLLKNIRIFLGMDSNNFFLTEELFN</sequence>
<feature type="chain" id="PRO_0000205898" description="Putative cell division topological specificity factor">
    <location>
        <begin position="1"/>
        <end position="127"/>
    </location>
</feature>
<name>MINE_CHLVU</name>
<proteinExistence type="inferred from homology"/>